<name>RL32_ORITB</name>
<evidence type="ECO:0000255" key="1">
    <source>
        <dbReference type="HAMAP-Rule" id="MF_00340"/>
    </source>
</evidence>
<evidence type="ECO:0000305" key="2"/>
<dbReference type="EMBL" id="AM494475">
    <property type="protein sequence ID" value="CAM79517.1"/>
    <property type="molecule type" value="Genomic_DNA"/>
</dbReference>
<dbReference type="RefSeq" id="WP_011944491.1">
    <property type="nucleotide sequence ID" value="NC_009488.1"/>
</dbReference>
<dbReference type="SMR" id="A5CCS3"/>
<dbReference type="KEGG" id="ots:OTBS_0451"/>
<dbReference type="eggNOG" id="COG0333">
    <property type="taxonomic scope" value="Bacteria"/>
</dbReference>
<dbReference type="HOGENOM" id="CLU_129084_2_0_5"/>
<dbReference type="Proteomes" id="UP000001565">
    <property type="component" value="Chromosome"/>
</dbReference>
<dbReference type="GO" id="GO:0015934">
    <property type="term" value="C:large ribosomal subunit"/>
    <property type="evidence" value="ECO:0007669"/>
    <property type="project" value="InterPro"/>
</dbReference>
<dbReference type="GO" id="GO:0003735">
    <property type="term" value="F:structural constituent of ribosome"/>
    <property type="evidence" value="ECO:0007669"/>
    <property type="project" value="InterPro"/>
</dbReference>
<dbReference type="GO" id="GO:0006412">
    <property type="term" value="P:translation"/>
    <property type="evidence" value="ECO:0007669"/>
    <property type="project" value="UniProtKB-UniRule"/>
</dbReference>
<dbReference type="Gene3D" id="1.20.5.640">
    <property type="entry name" value="Single helix bin"/>
    <property type="match status" value="1"/>
</dbReference>
<dbReference type="HAMAP" id="MF_00340">
    <property type="entry name" value="Ribosomal_bL32"/>
    <property type="match status" value="1"/>
</dbReference>
<dbReference type="InterPro" id="IPR002677">
    <property type="entry name" value="Ribosomal_bL32"/>
</dbReference>
<dbReference type="InterPro" id="IPR044957">
    <property type="entry name" value="Ribosomal_bL32_bact"/>
</dbReference>
<dbReference type="InterPro" id="IPR011332">
    <property type="entry name" value="Ribosomal_zn-bd"/>
</dbReference>
<dbReference type="NCBIfam" id="TIGR01031">
    <property type="entry name" value="rpmF_bact"/>
    <property type="match status" value="1"/>
</dbReference>
<dbReference type="PANTHER" id="PTHR35534">
    <property type="entry name" value="50S RIBOSOMAL PROTEIN L32"/>
    <property type="match status" value="1"/>
</dbReference>
<dbReference type="PANTHER" id="PTHR35534:SF1">
    <property type="entry name" value="LARGE RIBOSOMAL SUBUNIT PROTEIN BL32"/>
    <property type="match status" value="1"/>
</dbReference>
<dbReference type="Pfam" id="PF01783">
    <property type="entry name" value="Ribosomal_L32p"/>
    <property type="match status" value="1"/>
</dbReference>
<dbReference type="SUPFAM" id="SSF57829">
    <property type="entry name" value="Zn-binding ribosomal proteins"/>
    <property type="match status" value="1"/>
</dbReference>
<sequence length="68" mass="7632">MAVPKKRTSASKTRMRRSHHALAKVNVITDAKTGEYRLSHHVCMTHGTYNGKKVITDNVNTNDNNNNP</sequence>
<keyword id="KW-1185">Reference proteome</keyword>
<keyword id="KW-0687">Ribonucleoprotein</keyword>
<keyword id="KW-0689">Ribosomal protein</keyword>
<gene>
    <name evidence="1" type="primary">rpmF</name>
    <name type="ordered locus">OTBS_0451</name>
</gene>
<feature type="chain" id="PRO_1000005068" description="Large ribosomal subunit protein bL32">
    <location>
        <begin position="1"/>
        <end position="68"/>
    </location>
</feature>
<comment type="similarity">
    <text evidence="1">Belongs to the bacterial ribosomal protein bL32 family.</text>
</comment>
<reference key="1">
    <citation type="journal article" date="2007" name="Proc. Natl. Acad. Sci. U.S.A.">
        <title>The Orientia tsutsugamushi genome reveals massive proliferation of conjugative type IV secretion system and host-cell interaction genes.</title>
        <authorList>
            <person name="Cho N.-H."/>
            <person name="Kim H.-R."/>
            <person name="Lee J.-H."/>
            <person name="Kim S.-Y."/>
            <person name="Kim J."/>
            <person name="Cha S."/>
            <person name="Kim S.-Y."/>
            <person name="Darby A.C."/>
            <person name="Fuxelius H.-H."/>
            <person name="Yin J."/>
            <person name="Kim J.H."/>
            <person name="Kim J."/>
            <person name="Lee S.J."/>
            <person name="Koh Y.-S."/>
            <person name="Jang W.-J."/>
            <person name="Park K.-H."/>
            <person name="Andersson S.G.E."/>
            <person name="Choi M.-S."/>
            <person name="Kim I.-S."/>
        </authorList>
    </citation>
    <scope>NUCLEOTIDE SEQUENCE [LARGE SCALE GENOMIC DNA]</scope>
    <source>
        <strain>Boryong</strain>
    </source>
</reference>
<proteinExistence type="inferred from homology"/>
<protein>
    <recommendedName>
        <fullName evidence="1">Large ribosomal subunit protein bL32</fullName>
    </recommendedName>
    <alternativeName>
        <fullName evidence="2">50S ribosomal protein L32</fullName>
    </alternativeName>
</protein>
<accession>A5CCS3</accession>
<organism>
    <name type="scientific">Orientia tsutsugamushi (strain Boryong)</name>
    <name type="common">Rickettsia tsutsugamushi</name>
    <dbReference type="NCBI Taxonomy" id="357244"/>
    <lineage>
        <taxon>Bacteria</taxon>
        <taxon>Pseudomonadati</taxon>
        <taxon>Pseudomonadota</taxon>
        <taxon>Alphaproteobacteria</taxon>
        <taxon>Rickettsiales</taxon>
        <taxon>Rickettsiaceae</taxon>
        <taxon>Rickettsieae</taxon>
        <taxon>Orientia</taxon>
    </lineage>
</organism>